<reference key="1">
    <citation type="submission" date="1994-01" db="EMBL/GenBank/DDBJ databases">
        <title>The complete lpl cluster of Bacillus subtilis.</title>
        <authorList>
            <person name="Gomez A."/>
            <person name="Ramon D."/>
            <person name="Sanz P."/>
        </authorList>
    </citation>
    <scope>NUCLEOTIDE SEQUENCE [GENOMIC DNA]</scope>
    <source>
        <strain>168 / Marburg / ATCC 6051 / DSM 10 / JCM 1465 / NBRC 13719 / NCIMB 3610 / NRRL NRS-744 / VKM B-501</strain>
    </source>
</reference>
<reference key="2">
    <citation type="journal article" date="1997" name="Nature">
        <title>The complete genome sequence of the Gram-positive bacterium Bacillus subtilis.</title>
        <authorList>
            <person name="Kunst F."/>
            <person name="Ogasawara N."/>
            <person name="Moszer I."/>
            <person name="Albertini A.M."/>
            <person name="Alloni G."/>
            <person name="Azevedo V."/>
            <person name="Bertero M.G."/>
            <person name="Bessieres P."/>
            <person name="Bolotin A."/>
            <person name="Borchert S."/>
            <person name="Borriss R."/>
            <person name="Boursier L."/>
            <person name="Brans A."/>
            <person name="Braun M."/>
            <person name="Brignell S.C."/>
            <person name="Bron S."/>
            <person name="Brouillet S."/>
            <person name="Bruschi C.V."/>
            <person name="Caldwell B."/>
            <person name="Capuano V."/>
            <person name="Carter N.M."/>
            <person name="Choi S.-K."/>
            <person name="Codani J.-J."/>
            <person name="Connerton I.F."/>
            <person name="Cummings N.J."/>
            <person name="Daniel R.A."/>
            <person name="Denizot F."/>
            <person name="Devine K.M."/>
            <person name="Duesterhoeft A."/>
            <person name="Ehrlich S.D."/>
            <person name="Emmerson P.T."/>
            <person name="Entian K.-D."/>
            <person name="Errington J."/>
            <person name="Fabret C."/>
            <person name="Ferrari E."/>
            <person name="Foulger D."/>
            <person name="Fritz C."/>
            <person name="Fujita M."/>
            <person name="Fujita Y."/>
            <person name="Fuma S."/>
            <person name="Galizzi A."/>
            <person name="Galleron N."/>
            <person name="Ghim S.-Y."/>
            <person name="Glaser P."/>
            <person name="Goffeau A."/>
            <person name="Golightly E.J."/>
            <person name="Grandi G."/>
            <person name="Guiseppi G."/>
            <person name="Guy B.J."/>
            <person name="Haga K."/>
            <person name="Haiech J."/>
            <person name="Harwood C.R."/>
            <person name="Henaut A."/>
            <person name="Hilbert H."/>
            <person name="Holsappel S."/>
            <person name="Hosono S."/>
            <person name="Hullo M.-F."/>
            <person name="Itaya M."/>
            <person name="Jones L.-M."/>
            <person name="Joris B."/>
            <person name="Karamata D."/>
            <person name="Kasahara Y."/>
            <person name="Klaerr-Blanchard M."/>
            <person name="Klein C."/>
            <person name="Kobayashi Y."/>
            <person name="Koetter P."/>
            <person name="Koningstein G."/>
            <person name="Krogh S."/>
            <person name="Kumano M."/>
            <person name="Kurita K."/>
            <person name="Lapidus A."/>
            <person name="Lardinois S."/>
            <person name="Lauber J."/>
            <person name="Lazarevic V."/>
            <person name="Lee S.-M."/>
            <person name="Levine A."/>
            <person name="Liu H."/>
            <person name="Masuda S."/>
            <person name="Mauel C."/>
            <person name="Medigue C."/>
            <person name="Medina N."/>
            <person name="Mellado R.P."/>
            <person name="Mizuno M."/>
            <person name="Moestl D."/>
            <person name="Nakai S."/>
            <person name="Noback M."/>
            <person name="Noone D."/>
            <person name="O'Reilly M."/>
            <person name="Ogawa K."/>
            <person name="Ogiwara A."/>
            <person name="Oudega B."/>
            <person name="Park S.-H."/>
            <person name="Parro V."/>
            <person name="Pohl T.M."/>
            <person name="Portetelle D."/>
            <person name="Porwollik S."/>
            <person name="Prescott A.M."/>
            <person name="Presecan E."/>
            <person name="Pujic P."/>
            <person name="Purnelle B."/>
            <person name="Rapoport G."/>
            <person name="Rey M."/>
            <person name="Reynolds S."/>
            <person name="Rieger M."/>
            <person name="Rivolta C."/>
            <person name="Rocha E."/>
            <person name="Roche B."/>
            <person name="Rose M."/>
            <person name="Sadaie Y."/>
            <person name="Sato T."/>
            <person name="Scanlan E."/>
            <person name="Schleich S."/>
            <person name="Schroeter R."/>
            <person name="Scoffone F."/>
            <person name="Sekiguchi J."/>
            <person name="Sekowska A."/>
            <person name="Seror S.J."/>
            <person name="Serror P."/>
            <person name="Shin B.-S."/>
            <person name="Soldo B."/>
            <person name="Sorokin A."/>
            <person name="Tacconi E."/>
            <person name="Takagi T."/>
            <person name="Takahashi H."/>
            <person name="Takemaru K."/>
            <person name="Takeuchi M."/>
            <person name="Tamakoshi A."/>
            <person name="Tanaka T."/>
            <person name="Terpstra P."/>
            <person name="Tognoni A."/>
            <person name="Tosato V."/>
            <person name="Uchiyama S."/>
            <person name="Vandenbol M."/>
            <person name="Vannier F."/>
            <person name="Vassarotti A."/>
            <person name="Viari A."/>
            <person name="Wambutt R."/>
            <person name="Wedler E."/>
            <person name="Wedler H."/>
            <person name="Weitzenegger T."/>
            <person name="Winters P."/>
            <person name="Wipat A."/>
            <person name="Yamamoto H."/>
            <person name="Yamane K."/>
            <person name="Yasumoto K."/>
            <person name="Yata K."/>
            <person name="Yoshida K."/>
            <person name="Yoshikawa H.-F."/>
            <person name="Zumstein E."/>
            <person name="Yoshikawa H."/>
            <person name="Danchin A."/>
        </authorList>
    </citation>
    <scope>NUCLEOTIDE SEQUENCE [LARGE SCALE GENOMIC DNA]</scope>
    <source>
        <strain>168</strain>
    </source>
</reference>
<reference key="3">
    <citation type="journal article" date="2013" name="FEBS Lett.">
        <title>alpha-Galacturonidase(s): A new class of Family 4 glycoside hydrolases with strict specificity and a unique CHEV active site motif.</title>
        <authorList>
            <person name="Thompson J."/>
            <person name="Pikis A."/>
            <person name="Rich J."/>
            <person name="Hall B.G."/>
            <person name="Withers S.G."/>
        </authorList>
    </citation>
    <scope>FUNCTION</scope>
    <scope>CATALYTIC ACTIVITY</scope>
    <scope>SUBSTRATE SPECIFICITY</scope>
    <scope>COFACTOR</scope>
    <scope>KINETIC PARAMETERS</scope>
    <scope>SUBUNIT</scope>
    <scope>MUTAGENESIS OF CYS-172</scope>
    <source>
        <strain>168</strain>
    </source>
</reference>
<reference key="4">
    <citation type="submission" date="2008-12" db="PDB data bank">
        <title>Crystal structure of putative glucosidase LplD from Bacillus subtilis.</title>
        <authorList>
            <consortium name="New York SGX Research Center for Structural Genomics (NYSGXRC)"/>
        </authorList>
    </citation>
    <scope>X-RAY CRYSTALLOGRAPHY (2.20 ANGSTROMS) OF 7-446 IN COMPLEX WITH MAGNESIUM</scope>
    <scope>SUBUNIT</scope>
</reference>
<comment type="function">
    <text evidence="2">Alpha-galacturonidase able to catalyze the hydrolysis of the chromogenic substrate p-nitrophenyl-alpha-D-galacturonic acid (pNPalphaGalUA), and of the probable natural substrate alpha-1,4-di-galacturonate (GalUA(2)). Can neither hydrolyze pNPbetaGalUA, nor the stereoisomeric pNPalphaGlcUA. Does not display alpha- or beta-glucosidase activity as it fails to hydrolyze melibiose, raffinose, lactose and the chromogenic analogs, pNPalphaGal and pNPbetaGal. Cannot use the following compounds as substrates: pNP-N-acetyl-alpha- and beta-D-galactosaminide, pNP-N-acetyl-alpha- and beta-D-glucosaminide, pNP-alpha-L- and beta-L-arabinopyranoside, pNP-alpha- and beta-D-glucuronide, pNP-alpha- and beta-D-glucopyranoside, pNP-alpha- and beta-D-glucopyranoside 6-phosphate, pNP-alpha-D-galactopyranoside 6-phosphate and oNP-beta-D-galactopyranoside 6-phosphate.</text>
</comment>
<comment type="catalytic activity">
    <reaction evidence="2">
        <text>[(1-&gt;4)-alpha-D-galacturonosyl](n) + H2O = alpha-D-galacturonate + [(1-&gt;4)-alpha-D-galacturonosyl](n-1)</text>
        <dbReference type="Rhea" id="RHEA:14117"/>
        <dbReference type="Rhea" id="RHEA-COMP:14570"/>
        <dbReference type="Rhea" id="RHEA-COMP:14572"/>
        <dbReference type="ChEBI" id="CHEBI:15377"/>
        <dbReference type="ChEBI" id="CHEBI:58658"/>
        <dbReference type="ChEBI" id="CHEBI:140523"/>
        <dbReference type="EC" id="3.2.1.67"/>
    </reaction>
</comment>
<comment type="cofactor">
    <cofactor evidence="5">
        <name>NAD(+)</name>
        <dbReference type="ChEBI" id="CHEBI:57540"/>
    </cofactor>
</comment>
<comment type="cofactor">
    <cofactor evidence="2">
        <name>Mn(2+)</name>
        <dbReference type="ChEBI" id="CHEBI:29035"/>
    </cofactor>
    <text evidence="2">Binds 1 Mn(2+) ion per subunit. Although a Mg(2+) ion is seen in the structure, galacturonidase activity was shown using manganese (PubMed:23416295).</text>
</comment>
<comment type="biophysicochemical properties">
    <kinetics>
        <KM evidence="2">0.62 uM for pNPalphaGalUA (at about 37 degrees Celsius)</KM>
        <Vmax evidence="2">4.33 umol/min/mg enzyme with pNPalphaGalUA as substrate (at about 37 degrees Celsius)</Vmax>
        <text>kcat is 3.6 sec(-1) with pNPalphaGalUA as substrate (at about 37 degrees Celsius).</text>
    </kinetics>
</comment>
<comment type="subunit">
    <text evidence="2 3">Homotetramer.</text>
</comment>
<comment type="similarity">
    <text evidence="4">Belongs to the glycosyl hydrolase 4 family.</text>
</comment>
<accession>P39130</accession>
<accession>O31532</accession>
<name>LPLD_BACSU</name>
<sequence length="446" mass="49487">MFHISTLDQIKIAYIGGGSQGWARSLMSDLSIDERMSGTVALYDLDFEAAQKNEVIGNHSGNGRWRYEAVSTLKKALSAADIVIISILPGSLDDMEVDVHLPERCGIYQSVGDTVGPGGIIRGLRAVPIFAEIARAIRDYAPESWVINYTNPMSVCTRVLYKVFPGIKAIGCCHEVFGTQKLLAEMVTERLGIEVPRREDIRVNVLGINHFTWITKASYRHIDLLPIFREFSAHYGESGYELEGECWRDSVFCSAHRVAFDLFETYGAIPAAGDRHLAEFLPGPYLKQPEVWKFHLTPISFRKQDRAEKRQETERLIVQQRGVAEKASGEEGVNIIAALLGLGELVTNVNMPNQGQVLNLPIQAIVETNAFITRNRVQPILSGALPKGVEMLAARHISNQEAVADAGLTKDTGLAFQAFLNDPLVQIDRSDAEQLFNDMLQCIMQS</sequence>
<dbReference type="EC" id="3.2.1.67"/>
<dbReference type="EMBL" id="L19165">
    <property type="protein sequence ID" value="AAA22577.1"/>
    <property type="molecule type" value="Genomic_DNA"/>
</dbReference>
<dbReference type="EMBL" id="AL009126">
    <property type="protein sequence ID" value="CAB12532.1"/>
    <property type="molecule type" value="Genomic_DNA"/>
</dbReference>
<dbReference type="PIR" id="C69653">
    <property type="entry name" value="C69653"/>
</dbReference>
<dbReference type="RefSeq" id="NP_388594.1">
    <property type="nucleotide sequence ID" value="NC_000964.3"/>
</dbReference>
<dbReference type="RefSeq" id="WP_003244472.1">
    <property type="nucleotide sequence ID" value="NZ_OZ025638.1"/>
</dbReference>
<dbReference type="PDB" id="3FEF">
    <property type="method" value="X-ray"/>
    <property type="resolution" value="2.20 A"/>
    <property type="chains" value="A/B/C/D=7-446"/>
</dbReference>
<dbReference type="PDBsum" id="3FEF"/>
<dbReference type="SMR" id="P39130"/>
<dbReference type="FunCoup" id="P39130">
    <property type="interactions" value="26"/>
</dbReference>
<dbReference type="STRING" id="224308.BSU07130"/>
<dbReference type="CAZy" id="GH4">
    <property type="family name" value="Glycoside Hydrolase Family 4"/>
</dbReference>
<dbReference type="PaxDb" id="224308-BSU07130"/>
<dbReference type="DNASU" id="938770"/>
<dbReference type="EnsemblBacteria" id="CAB12532">
    <property type="protein sequence ID" value="CAB12532"/>
    <property type="gene ID" value="BSU_07130"/>
</dbReference>
<dbReference type="GeneID" id="938770"/>
<dbReference type="KEGG" id="bsu:BSU07130"/>
<dbReference type="PATRIC" id="fig|224308.179.peg.773"/>
<dbReference type="eggNOG" id="COG1486">
    <property type="taxonomic scope" value="Bacteria"/>
</dbReference>
<dbReference type="InParanoid" id="P39130"/>
<dbReference type="OrthoDB" id="9808275at2"/>
<dbReference type="PhylomeDB" id="P39130"/>
<dbReference type="BioCyc" id="BSUB:BSU07130-MONOMER"/>
<dbReference type="EvolutionaryTrace" id="P39130"/>
<dbReference type="Proteomes" id="UP000001570">
    <property type="component" value="Chromosome"/>
</dbReference>
<dbReference type="GO" id="GO:0005829">
    <property type="term" value="C:cytosol"/>
    <property type="evidence" value="ECO:0000318"/>
    <property type="project" value="GO_Central"/>
</dbReference>
<dbReference type="GO" id="GO:0047911">
    <property type="term" value="F:galacturan 1,4-alpha-galacturonidase activity"/>
    <property type="evidence" value="ECO:0007669"/>
    <property type="project" value="UniProtKB-EC"/>
</dbReference>
<dbReference type="GO" id="GO:0004553">
    <property type="term" value="F:hydrolase activity, hydrolyzing O-glycosyl compounds"/>
    <property type="evidence" value="ECO:0000318"/>
    <property type="project" value="GO_Central"/>
</dbReference>
<dbReference type="GO" id="GO:0046872">
    <property type="term" value="F:metal ion binding"/>
    <property type="evidence" value="ECO:0007669"/>
    <property type="project" value="UniProtKB-KW"/>
</dbReference>
<dbReference type="GO" id="GO:0016616">
    <property type="term" value="F:oxidoreductase activity, acting on the CH-OH group of donors, NAD or NADP as acceptor"/>
    <property type="evidence" value="ECO:0007669"/>
    <property type="project" value="InterPro"/>
</dbReference>
<dbReference type="GO" id="GO:0005975">
    <property type="term" value="P:carbohydrate metabolic process"/>
    <property type="evidence" value="ECO:0007669"/>
    <property type="project" value="InterPro"/>
</dbReference>
<dbReference type="CDD" id="cd05297">
    <property type="entry name" value="GH4_alpha_glucosidase_galactosidase"/>
    <property type="match status" value="1"/>
</dbReference>
<dbReference type="Gene3D" id="3.90.1820.10">
    <property type="entry name" value="AglA-like glucosidase"/>
    <property type="match status" value="1"/>
</dbReference>
<dbReference type="InterPro" id="IPR053715">
    <property type="entry name" value="GH4_Enzyme_sf"/>
</dbReference>
<dbReference type="InterPro" id="IPR019802">
    <property type="entry name" value="GlycHydrolase_4_CS"/>
</dbReference>
<dbReference type="InterPro" id="IPR001088">
    <property type="entry name" value="Glyco_hydro_4"/>
</dbReference>
<dbReference type="InterPro" id="IPR022616">
    <property type="entry name" value="Glyco_hydro_4_C"/>
</dbReference>
<dbReference type="InterPro" id="IPR015955">
    <property type="entry name" value="Lactate_DH/Glyco_Ohase_4_C"/>
</dbReference>
<dbReference type="InterPro" id="IPR036291">
    <property type="entry name" value="NAD(P)-bd_dom_sf"/>
</dbReference>
<dbReference type="PANTHER" id="PTHR32092">
    <property type="entry name" value="6-PHOSPHO-BETA-GLUCOSIDASE-RELATED"/>
    <property type="match status" value="1"/>
</dbReference>
<dbReference type="PANTHER" id="PTHR32092:SF2">
    <property type="entry name" value="ALPHA-GALACTURONIDASE"/>
    <property type="match status" value="1"/>
</dbReference>
<dbReference type="Pfam" id="PF02056">
    <property type="entry name" value="Glyco_hydro_4"/>
    <property type="match status" value="1"/>
</dbReference>
<dbReference type="Pfam" id="PF11975">
    <property type="entry name" value="Glyco_hydro_4C"/>
    <property type="match status" value="1"/>
</dbReference>
<dbReference type="PRINTS" id="PR00732">
    <property type="entry name" value="GLHYDRLASE4"/>
</dbReference>
<dbReference type="SUPFAM" id="SSF56327">
    <property type="entry name" value="LDH C-terminal domain-like"/>
    <property type="match status" value="1"/>
</dbReference>
<dbReference type="SUPFAM" id="SSF51735">
    <property type="entry name" value="NAD(P)-binding Rossmann-fold domains"/>
    <property type="match status" value="1"/>
</dbReference>
<dbReference type="PROSITE" id="PS01324">
    <property type="entry name" value="GLYCOSYL_HYDROL_F4"/>
    <property type="match status" value="1"/>
</dbReference>
<gene>
    <name type="primary">lplD</name>
    <name type="ordered locus">BSU07130</name>
</gene>
<feature type="chain" id="PRO_0000169862" description="Alpha-galacturonidase">
    <location>
        <begin position="1"/>
        <end position="446"/>
    </location>
</feature>
<feature type="active site" description="Proton donor" evidence="1">
    <location>
        <position position="174"/>
    </location>
</feature>
<feature type="binding site" evidence="1">
    <location>
        <begin position="10"/>
        <end position="72"/>
    </location>
    <ligand>
        <name>NAD(+)</name>
        <dbReference type="ChEBI" id="CHEBI:57540"/>
    </ligand>
</feature>
<feature type="binding site" evidence="1">
    <location>
        <position position="151"/>
    </location>
    <ligand>
        <name>substrate</name>
    </ligand>
</feature>
<feature type="binding site">
    <location>
        <position position="173"/>
    </location>
    <ligand>
        <name>Mn(2+)</name>
        <dbReference type="ChEBI" id="CHEBI:29035"/>
    </ligand>
</feature>
<feature type="binding site">
    <location>
        <position position="210"/>
    </location>
    <ligand>
        <name>Mn(2+)</name>
        <dbReference type="ChEBI" id="CHEBI:29035"/>
    </ligand>
</feature>
<feature type="mutagenesis site" description="Does not significantly affect alpha-galacturonidase activity." evidence="2">
    <original>C</original>
    <variation>L</variation>
    <location>
        <position position="172"/>
    </location>
</feature>
<feature type="sequence conflict" description="In Ref. 1; AAA22577." evidence="4" ref="1">
    <original>R</original>
    <variation>T</variation>
    <location>
        <position position="66"/>
    </location>
</feature>
<feature type="sequence conflict" description="In Ref. 1; AAA22577." evidence="4" ref="1">
    <original>S</original>
    <variation>Y</variation>
    <location>
        <position position="154"/>
    </location>
</feature>
<feature type="strand" evidence="6">
    <location>
        <begin position="10"/>
        <end position="15"/>
    </location>
</feature>
<feature type="turn" evidence="6">
    <location>
        <begin position="16"/>
        <end position="18"/>
    </location>
</feature>
<feature type="helix" evidence="6">
    <location>
        <begin position="22"/>
        <end position="32"/>
    </location>
</feature>
<feature type="strand" evidence="6">
    <location>
        <begin position="38"/>
        <end position="43"/>
    </location>
</feature>
<feature type="helix" evidence="6">
    <location>
        <begin position="47"/>
        <end position="57"/>
    </location>
</feature>
<feature type="strand" evidence="6">
    <location>
        <begin position="65"/>
        <end position="69"/>
    </location>
</feature>
<feature type="helix" evidence="6">
    <location>
        <begin position="73"/>
        <end position="77"/>
    </location>
</feature>
<feature type="strand" evidence="6">
    <location>
        <begin position="81"/>
        <end position="85"/>
    </location>
</feature>
<feature type="helix" evidence="6">
    <location>
        <begin position="92"/>
        <end position="100"/>
    </location>
</feature>
<feature type="helix" evidence="6">
    <location>
        <begin position="101"/>
        <end position="105"/>
    </location>
</feature>
<feature type="strand" evidence="6">
    <location>
        <begin position="113"/>
        <end position="115"/>
    </location>
</feature>
<feature type="helix" evidence="6">
    <location>
        <begin position="116"/>
        <end position="140"/>
    </location>
</feature>
<feature type="strand" evidence="6">
    <location>
        <begin position="144"/>
        <end position="148"/>
    </location>
</feature>
<feature type="helix" evidence="6">
    <location>
        <begin position="153"/>
        <end position="163"/>
    </location>
</feature>
<feature type="strand" evidence="6">
    <location>
        <begin position="168"/>
        <end position="171"/>
    </location>
</feature>
<feature type="helix" evidence="6">
    <location>
        <begin position="175"/>
        <end position="191"/>
    </location>
</feature>
<feature type="helix" evidence="6">
    <location>
        <begin position="198"/>
        <end position="200"/>
    </location>
</feature>
<feature type="strand" evidence="6">
    <location>
        <begin position="201"/>
        <end position="208"/>
    </location>
</feature>
<feature type="strand" evidence="6">
    <location>
        <begin position="211"/>
        <end position="219"/>
    </location>
</feature>
<feature type="helix" evidence="6">
    <location>
        <begin position="224"/>
        <end position="235"/>
    </location>
</feature>
<feature type="turn" evidence="6">
    <location>
        <begin position="236"/>
        <end position="238"/>
    </location>
</feature>
<feature type="helix" evidence="6">
    <location>
        <begin position="257"/>
        <end position="266"/>
    </location>
</feature>
<feature type="strand" evidence="6">
    <location>
        <begin position="267"/>
        <end position="270"/>
    </location>
</feature>
<feature type="helix" evidence="6">
    <location>
        <begin position="274"/>
        <end position="277"/>
    </location>
</feature>
<feature type="helix" evidence="6">
    <location>
        <begin position="285"/>
        <end position="287"/>
    </location>
</feature>
<feature type="turn" evidence="6">
    <location>
        <begin position="289"/>
        <end position="293"/>
    </location>
</feature>
<feature type="helix" evidence="6">
    <location>
        <begin position="299"/>
        <end position="318"/>
    </location>
</feature>
<feature type="helix" evidence="6">
    <location>
        <begin position="332"/>
        <end position="339"/>
    </location>
</feature>
<feature type="strand" evidence="6">
    <location>
        <begin position="345"/>
        <end position="352"/>
    </location>
</feature>
<feature type="strand" evidence="6">
    <location>
        <begin position="354"/>
        <end position="357"/>
    </location>
</feature>
<feature type="strand" evidence="6">
    <location>
        <begin position="364"/>
        <end position="373"/>
    </location>
</feature>
<feature type="strand" evidence="6">
    <location>
        <begin position="376"/>
        <end position="380"/>
    </location>
</feature>
<feature type="helix" evidence="6">
    <location>
        <begin position="387"/>
        <end position="409"/>
    </location>
</feature>
<feature type="helix" evidence="6">
    <location>
        <begin position="412"/>
        <end position="421"/>
    </location>
</feature>
<feature type="helix" evidence="6">
    <location>
        <begin position="429"/>
        <end position="439"/>
    </location>
</feature>
<organism>
    <name type="scientific">Bacillus subtilis (strain 168)</name>
    <dbReference type="NCBI Taxonomy" id="224308"/>
    <lineage>
        <taxon>Bacteria</taxon>
        <taxon>Bacillati</taxon>
        <taxon>Bacillota</taxon>
        <taxon>Bacilli</taxon>
        <taxon>Bacillales</taxon>
        <taxon>Bacillaceae</taxon>
        <taxon>Bacillus</taxon>
    </lineage>
</organism>
<proteinExistence type="evidence at protein level"/>
<evidence type="ECO:0000250" key="1"/>
<evidence type="ECO:0000269" key="2">
    <source>
    </source>
</evidence>
<evidence type="ECO:0000269" key="3">
    <source ref="4"/>
</evidence>
<evidence type="ECO:0000305" key="4"/>
<evidence type="ECO:0000305" key="5">
    <source>
    </source>
</evidence>
<evidence type="ECO:0007829" key="6">
    <source>
        <dbReference type="PDB" id="3FEF"/>
    </source>
</evidence>
<keyword id="KW-0002">3D-structure</keyword>
<keyword id="KW-0119">Carbohydrate metabolism</keyword>
<keyword id="KW-0326">Glycosidase</keyword>
<keyword id="KW-0378">Hydrolase</keyword>
<keyword id="KW-0464">Manganese</keyword>
<keyword id="KW-0479">Metal-binding</keyword>
<keyword id="KW-0520">NAD</keyword>
<keyword id="KW-1185">Reference proteome</keyword>
<protein>
    <recommendedName>
        <fullName>Alpha-galacturonidase</fullName>
        <ecNumber>3.2.1.67</ecNumber>
    </recommendedName>
</protein>